<sequence length="378" mass="40078">MLAPRRKTRQLMVGSVGVGSDHPISVQSMTTTKTHDINATLQQIAQLTASGCDIVRVACPKPVDAEALPIIAKKSPIPVIADIHFQPKYIFSAIDAGCAAVRVNPGNIKEFDGRVKEVAQAAGDAGIPIRIGVNGGSLDKRILDKYHGKATPEALVESALWEASLFEEHGYGDIAISVKHSDPVLMVEAYRQLAEKCDYPLHLGVTEAGPKFMGTIKSSVAFGALLSQGIGDTIRVSLSADPVEEIKVGDQILQSLNLRPRKLEIVSCPSCGRAQVDVYKLAEEVTEGLDGLEVPLRVAVMGCVVNGPGEARDADLGVASGNGKGQIFVKGEIIKTVPESQIVQTLIEEAMRIAETMDPEVLAAAEASGMKAEVKVTS</sequence>
<feature type="chain" id="PRO_0000190567" description="4-hydroxy-3-methylbut-2-en-1-yl diphosphate synthase (flavodoxin)">
    <location>
        <begin position="1"/>
        <end position="378"/>
    </location>
</feature>
<feature type="binding site" evidence="1">
    <location>
        <position position="268"/>
    </location>
    <ligand>
        <name>[4Fe-4S] cluster</name>
        <dbReference type="ChEBI" id="CHEBI:49883"/>
    </ligand>
</feature>
<feature type="binding site" evidence="1">
    <location>
        <position position="271"/>
    </location>
    <ligand>
        <name>[4Fe-4S] cluster</name>
        <dbReference type="ChEBI" id="CHEBI:49883"/>
    </ligand>
</feature>
<feature type="binding site" evidence="1">
    <location>
        <position position="303"/>
    </location>
    <ligand>
        <name>[4Fe-4S] cluster</name>
        <dbReference type="ChEBI" id="CHEBI:49883"/>
    </ligand>
</feature>
<feature type="binding site" evidence="1">
    <location>
        <position position="310"/>
    </location>
    <ligand>
        <name>[4Fe-4S] cluster</name>
        <dbReference type="ChEBI" id="CHEBI:49883"/>
    </ligand>
</feature>
<evidence type="ECO:0000255" key="1">
    <source>
        <dbReference type="HAMAP-Rule" id="MF_00159"/>
    </source>
</evidence>
<evidence type="ECO:0000305" key="2"/>
<protein>
    <recommendedName>
        <fullName evidence="1">4-hydroxy-3-methylbut-2-en-1-yl diphosphate synthase (flavodoxin)</fullName>
        <ecNumber evidence="1">1.17.7.3</ecNumber>
    </recommendedName>
    <alternativeName>
        <fullName evidence="1">1-hydroxy-2-methyl-2-(E)-butenyl 4-diphosphate synthase</fullName>
    </alternativeName>
</protein>
<gene>
    <name evidence="1" type="primary">ispG</name>
    <name type="ordered locus">CE1903</name>
</gene>
<name>ISPG_COREF</name>
<keyword id="KW-0004">4Fe-4S</keyword>
<keyword id="KW-0408">Iron</keyword>
<keyword id="KW-0411">Iron-sulfur</keyword>
<keyword id="KW-0414">Isoprene biosynthesis</keyword>
<keyword id="KW-0479">Metal-binding</keyword>
<keyword id="KW-0560">Oxidoreductase</keyword>
<keyword id="KW-1185">Reference proteome</keyword>
<accession>Q8FP82</accession>
<proteinExistence type="inferred from homology"/>
<reference key="1">
    <citation type="journal article" date="2003" name="Genome Res.">
        <title>Comparative complete genome sequence analysis of the amino acid replacements responsible for the thermostability of Corynebacterium efficiens.</title>
        <authorList>
            <person name="Nishio Y."/>
            <person name="Nakamura Y."/>
            <person name="Kawarabayasi Y."/>
            <person name="Usuda Y."/>
            <person name="Kimura E."/>
            <person name="Sugimoto S."/>
            <person name="Matsui K."/>
            <person name="Yamagishi A."/>
            <person name="Kikuchi H."/>
            <person name="Ikeo K."/>
            <person name="Gojobori T."/>
        </authorList>
    </citation>
    <scope>NUCLEOTIDE SEQUENCE [LARGE SCALE GENOMIC DNA]</scope>
    <source>
        <strain>DSM 44549 / YS-314 / AJ 12310 / JCM 11189 / NBRC 100395</strain>
    </source>
</reference>
<comment type="function">
    <text evidence="1">Converts 2C-methyl-D-erythritol 2,4-cyclodiphosphate (ME-2,4cPP) into 1-hydroxy-2-methyl-2-(E)-butenyl 4-diphosphate.</text>
</comment>
<comment type="catalytic activity">
    <reaction evidence="1">
        <text>(2E)-4-hydroxy-3-methylbut-2-enyl diphosphate + oxidized [flavodoxin] + H2O + 2 H(+) = 2-C-methyl-D-erythritol 2,4-cyclic diphosphate + reduced [flavodoxin]</text>
        <dbReference type="Rhea" id="RHEA:43604"/>
        <dbReference type="Rhea" id="RHEA-COMP:10622"/>
        <dbReference type="Rhea" id="RHEA-COMP:10623"/>
        <dbReference type="ChEBI" id="CHEBI:15377"/>
        <dbReference type="ChEBI" id="CHEBI:15378"/>
        <dbReference type="ChEBI" id="CHEBI:57618"/>
        <dbReference type="ChEBI" id="CHEBI:58210"/>
        <dbReference type="ChEBI" id="CHEBI:58483"/>
        <dbReference type="ChEBI" id="CHEBI:128753"/>
        <dbReference type="EC" id="1.17.7.3"/>
    </reaction>
</comment>
<comment type="cofactor">
    <cofactor evidence="1">
        <name>[4Fe-4S] cluster</name>
        <dbReference type="ChEBI" id="CHEBI:49883"/>
    </cofactor>
    <text evidence="1">Binds 1 [4Fe-4S] cluster.</text>
</comment>
<comment type="pathway">
    <text evidence="1">Isoprenoid biosynthesis; isopentenyl diphosphate biosynthesis via DXP pathway; isopentenyl diphosphate from 1-deoxy-D-xylulose 5-phosphate: step 5/6.</text>
</comment>
<comment type="similarity">
    <text evidence="1">Belongs to the IspG family.</text>
</comment>
<comment type="sequence caution" evidence="2">
    <conflict type="erroneous initiation">
        <sequence resource="EMBL-CDS" id="BAC18713"/>
    </conflict>
</comment>
<dbReference type="EC" id="1.17.7.3" evidence="1"/>
<dbReference type="EMBL" id="BA000035">
    <property type="protein sequence ID" value="BAC18713.1"/>
    <property type="status" value="ALT_INIT"/>
    <property type="molecule type" value="Genomic_DNA"/>
</dbReference>
<dbReference type="SMR" id="Q8FP82"/>
<dbReference type="STRING" id="196164.gene:10742331"/>
<dbReference type="KEGG" id="cef:CE1903"/>
<dbReference type="eggNOG" id="COG0821">
    <property type="taxonomic scope" value="Bacteria"/>
</dbReference>
<dbReference type="HOGENOM" id="CLU_042258_0_0_11"/>
<dbReference type="UniPathway" id="UPA00056">
    <property type="reaction ID" value="UER00096"/>
</dbReference>
<dbReference type="Proteomes" id="UP000001409">
    <property type="component" value="Chromosome"/>
</dbReference>
<dbReference type="GO" id="GO:0051539">
    <property type="term" value="F:4 iron, 4 sulfur cluster binding"/>
    <property type="evidence" value="ECO:0007669"/>
    <property type="project" value="UniProtKB-UniRule"/>
</dbReference>
<dbReference type="GO" id="GO:0046429">
    <property type="term" value="F:4-hydroxy-3-methylbut-2-en-1-yl diphosphate synthase activity (ferredoxin)"/>
    <property type="evidence" value="ECO:0007669"/>
    <property type="project" value="UniProtKB-UniRule"/>
</dbReference>
<dbReference type="GO" id="GO:0141197">
    <property type="term" value="F:4-hydroxy-3-methylbut-2-enyl-diphosphate synthase activity (flavodoxin)"/>
    <property type="evidence" value="ECO:0007669"/>
    <property type="project" value="UniProtKB-EC"/>
</dbReference>
<dbReference type="GO" id="GO:0005506">
    <property type="term" value="F:iron ion binding"/>
    <property type="evidence" value="ECO:0007669"/>
    <property type="project" value="InterPro"/>
</dbReference>
<dbReference type="GO" id="GO:0019288">
    <property type="term" value="P:isopentenyl diphosphate biosynthetic process, methylerythritol 4-phosphate pathway"/>
    <property type="evidence" value="ECO:0007669"/>
    <property type="project" value="UniProtKB-UniRule"/>
</dbReference>
<dbReference type="GO" id="GO:0016114">
    <property type="term" value="P:terpenoid biosynthetic process"/>
    <property type="evidence" value="ECO:0007669"/>
    <property type="project" value="InterPro"/>
</dbReference>
<dbReference type="FunFam" id="3.20.20.20:FF:000001">
    <property type="entry name" value="4-hydroxy-3-methylbut-2-en-1-yl diphosphate synthase (flavodoxin)"/>
    <property type="match status" value="1"/>
</dbReference>
<dbReference type="FunFam" id="3.30.413.10:FF:000001">
    <property type="entry name" value="4-hydroxy-3-methylbut-2-en-1-yl diphosphate synthase (flavodoxin)"/>
    <property type="match status" value="1"/>
</dbReference>
<dbReference type="Gene3D" id="3.20.20.20">
    <property type="entry name" value="Dihydropteroate synthase-like"/>
    <property type="match status" value="1"/>
</dbReference>
<dbReference type="Gene3D" id="3.30.413.10">
    <property type="entry name" value="Sulfite Reductase Hemoprotein, domain 1"/>
    <property type="match status" value="1"/>
</dbReference>
<dbReference type="HAMAP" id="MF_00159">
    <property type="entry name" value="IspG"/>
    <property type="match status" value="1"/>
</dbReference>
<dbReference type="InterPro" id="IPR011005">
    <property type="entry name" value="Dihydropteroate_synth-like_sf"/>
</dbReference>
<dbReference type="InterPro" id="IPR016425">
    <property type="entry name" value="IspG_bac"/>
</dbReference>
<dbReference type="InterPro" id="IPR004588">
    <property type="entry name" value="IspG_bac-typ"/>
</dbReference>
<dbReference type="InterPro" id="IPR045854">
    <property type="entry name" value="NO2/SO3_Rdtase_4Fe4S_sf"/>
</dbReference>
<dbReference type="NCBIfam" id="TIGR00612">
    <property type="entry name" value="ispG_gcpE"/>
    <property type="match status" value="1"/>
</dbReference>
<dbReference type="NCBIfam" id="NF001540">
    <property type="entry name" value="PRK00366.1"/>
    <property type="match status" value="1"/>
</dbReference>
<dbReference type="PANTHER" id="PTHR30454">
    <property type="entry name" value="4-HYDROXY-3-METHYLBUT-2-EN-1-YL DIPHOSPHATE SYNTHASE"/>
    <property type="match status" value="1"/>
</dbReference>
<dbReference type="PANTHER" id="PTHR30454:SF0">
    <property type="entry name" value="4-HYDROXY-3-METHYLBUT-2-EN-1-YL DIPHOSPHATE SYNTHASE (FERREDOXIN), CHLOROPLASTIC"/>
    <property type="match status" value="1"/>
</dbReference>
<dbReference type="Pfam" id="PF04551">
    <property type="entry name" value="GcpE"/>
    <property type="match status" value="1"/>
</dbReference>
<dbReference type="PIRSF" id="PIRSF004640">
    <property type="entry name" value="IspG"/>
    <property type="match status" value="1"/>
</dbReference>
<dbReference type="SUPFAM" id="SSF51717">
    <property type="entry name" value="Dihydropteroate synthetase-like"/>
    <property type="match status" value="1"/>
</dbReference>
<dbReference type="SUPFAM" id="SSF56014">
    <property type="entry name" value="Nitrite and sulphite reductase 4Fe-4S domain-like"/>
    <property type="match status" value="1"/>
</dbReference>
<organism>
    <name type="scientific">Corynebacterium efficiens (strain DSM 44549 / YS-314 / AJ 12310 / JCM 11189 / NBRC 100395)</name>
    <dbReference type="NCBI Taxonomy" id="196164"/>
    <lineage>
        <taxon>Bacteria</taxon>
        <taxon>Bacillati</taxon>
        <taxon>Actinomycetota</taxon>
        <taxon>Actinomycetes</taxon>
        <taxon>Mycobacteriales</taxon>
        <taxon>Corynebacteriaceae</taxon>
        <taxon>Corynebacterium</taxon>
    </lineage>
</organism>